<accession>Q65VM9</accession>
<dbReference type="EMBL" id="AE016827">
    <property type="protein sequence ID" value="AAU36981.1"/>
    <property type="molecule type" value="Genomic_DNA"/>
</dbReference>
<dbReference type="RefSeq" id="WP_011199556.1">
    <property type="nucleotide sequence ID" value="NC_006300.1"/>
</dbReference>
<dbReference type="SMR" id="Q65VM9"/>
<dbReference type="STRING" id="221988.MS0374"/>
<dbReference type="KEGG" id="msu:MS0374"/>
<dbReference type="eggNOG" id="COG3022">
    <property type="taxonomic scope" value="Bacteria"/>
</dbReference>
<dbReference type="HOGENOM" id="CLU_061989_0_0_6"/>
<dbReference type="OrthoDB" id="9777133at2"/>
<dbReference type="Proteomes" id="UP000000607">
    <property type="component" value="Chromosome"/>
</dbReference>
<dbReference type="GO" id="GO:0005829">
    <property type="term" value="C:cytosol"/>
    <property type="evidence" value="ECO:0007669"/>
    <property type="project" value="TreeGrafter"/>
</dbReference>
<dbReference type="GO" id="GO:0033194">
    <property type="term" value="P:response to hydroperoxide"/>
    <property type="evidence" value="ECO:0007669"/>
    <property type="project" value="TreeGrafter"/>
</dbReference>
<dbReference type="HAMAP" id="MF_00652">
    <property type="entry name" value="UPF0246"/>
    <property type="match status" value="1"/>
</dbReference>
<dbReference type="InterPro" id="IPR005583">
    <property type="entry name" value="YaaA"/>
</dbReference>
<dbReference type="NCBIfam" id="NF002541">
    <property type="entry name" value="PRK02101.1-1"/>
    <property type="match status" value="1"/>
</dbReference>
<dbReference type="NCBIfam" id="NF002542">
    <property type="entry name" value="PRK02101.1-3"/>
    <property type="match status" value="1"/>
</dbReference>
<dbReference type="PANTHER" id="PTHR30283:SF4">
    <property type="entry name" value="PEROXIDE STRESS RESISTANCE PROTEIN YAAA"/>
    <property type="match status" value="1"/>
</dbReference>
<dbReference type="PANTHER" id="PTHR30283">
    <property type="entry name" value="PEROXIDE STRESS RESPONSE PROTEIN YAAA"/>
    <property type="match status" value="1"/>
</dbReference>
<dbReference type="Pfam" id="PF03883">
    <property type="entry name" value="H2O2_YaaD"/>
    <property type="match status" value="1"/>
</dbReference>
<protein>
    <recommendedName>
        <fullName evidence="1">UPF0246 protein MS0374</fullName>
    </recommendedName>
</protein>
<reference key="1">
    <citation type="journal article" date="2004" name="Nat. Biotechnol.">
        <title>The genome sequence of the capnophilic rumen bacterium Mannheimia succiniciproducens.</title>
        <authorList>
            <person name="Hong S.H."/>
            <person name="Kim J.S."/>
            <person name="Lee S.Y."/>
            <person name="In Y.H."/>
            <person name="Choi S.S."/>
            <person name="Rih J.-K."/>
            <person name="Kim C.H."/>
            <person name="Jeong H."/>
            <person name="Hur C.G."/>
            <person name="Kim J.J."/>
        </authorList>
    </citation>
    <scope>NUCLEOTIDE SEQUENCE [LARGE SCALE GENOMIC DNA]</scope>
    <source>
        <strain>KCTC 0769BP / MBEL55E</strain>
    </source>
</reference>
<feature type="chain" id="PRO_0000262033" description="UPF0246 protein MS0374">
    <location>
        <begin position="1"/>
        <end position="258"/>
    </location>
</feature>
<name>Y374_MANSM</name>
<sequence length="258" mass="29155">MLAIISPAKTLDYQSAVPKFEISQPQLTQYSQQLIDICKQLSPAQIASLMSISDKLAGLNAARFADWQADHNEQNARPAIYAFKGDVYTGLDVESLTSDDVLFAQQHLRMLSGLYGLLKPLDLMQPYRLEMGTKLANKKGKDLYAFWGNVITQTLQQALDEQGDNILVNLASDEYYKAVQASQLKARIIKPVFLDNKGGKYKVISFYAKKARGLMCRYIIQNRLTEAEQLKEFNLAGYWFDEAASTKDEFVFKRDLGE</sequence>
<organism>
    <name type="scientific">Mannheimia succiniciproducens (strain KCTC 0769BP / MBEL55E)</name>
    <dbReference type="NCBI Taxonomy" id="221988"/>
    <lineage>
        <taxon>Bacteria</taxon>
        <taxon>Pseudomonadati</taxon>
        <taxon>Pseudomonadota</taxon>
        <taxon>Gammaproteobacteria</taxon>
        <taxon>Pasteurellales</taxon>
        <taxon>Pasteurellaceae</taxon>
        <taxon>Basfia</taxon>
    </lineage>
</organism>
<comment type="similarity">
    <text evidence="1">Belongs to the UPF0246 family.</text>
</comment>
<proteinExistence type="inferred from homology"/>
<gene>
    <name type="ordered locus">MS0374</name>
</gene>
<evidence type="ECO:0000255" key="1">
    <source>
        <dbReference type="HAMAP-Rule" id="MF_00652"/>
    </source>
</evidence>